<gene>
    <name evidence="1" type="primary">lipB</name>
    <name type="ordered locus">BF2088</name>
</gene>
<proteinExistence type="inferred from homology"/>
<evidence type="ECO:0000255" key="1">
    <source>
        <dbReference type="HAMAP-Rule" id="MF_00013"/>
    </source>
</evidence>
<evidence type="ECO:0000255" key="2">
    <source>
        <dbReference type="PROSITE-ProRule" id="PRU01067"/>
    </source>
</evidence>
<organism>
    <name type="scientific">Bacteroides fragilis (strain ATCC 25285 / DSM 2151 / CCUG 4856 / JCM 11019 / LMG 10263 / NCTC 9343 / Onslow / VPI 2553 / EN-2)</name>
    <dbReference type="NCBI Taxonomy" id="272559"/>
    <lineage>
        <taxon>Bacteria</taxon>
        <taxon>Pseudomonadati</taxon>
        <taxon>Bacteroidota</taxon>
        <taxon>Bacteroidia</taxon>
        <taxon>Bacteroidales</taxon>
        <taxon>Bacteroidaceae</taxon>
        <taxon>Bacteroides</taxon>
    </lineage>
</organism>
<sequence length="221" mass="24884">MKTITTDWELIPYSEAWSRQTEWFDALVHAKQNGESYENRIIFCEHPHVYTLGRSGKENNMLLGEEQLKTIGATLYHIDRGGDITYHGPGQLVCYPILNLEEFGLGLKEYVHLLEEAVIRVCASYGVVAGRLEKATGVWLEGDTSRARKICAIGVRSSHYVTMHGLALNVNTDLRYFSYIHPCGFIDKGVTSLQQELGHSIDMAEVKERLGRELLAALLSK</sequence>
<dbReference type="EC" id="2.3.1.181" evidence="1"/>
<dbReference type="EMBL" id="CR626927">
    <property type="protein sequence ID" value="CAH07785.1"/>
    <property type="molecule type" value="Genomic_DNA"/>
</dbReference>
<dbReference type="RefSeq" id="WP_010992840.1">
    <property type="nucleotide sequence ID" value="NC_003228.3"/>
</dbReference>
<dbReference type="SMR" id="Q5LDM3"/>
<dbReference type="PaxDb" id="272559-BF9343_2004"/>
<dbReference type="GeneID" id="60369799"/>
<dbReference type="KEGG" id="bfs:BF9343_2004"/>
<dbReference type="eggNOG" id="COG0321">
    <property type="taxonomic scope" value="Bacteria"/>
</dbReference>
<dbReference type="HOGENOM" id="CLU_035168_1_3_10"/>
<dbReference type="UniPathway" id="UPA00538">
    <property type="reaction ID" value="UER00592"/>
</dbReference>
<dbReference type="Proteomes" id="UP000006731">
    <property type="component" value="Chromosome"/>
</dbReference>
<dbReference type="GO" id="GO:0005737">
    <property type="term" value="C:cytoplasm"/>
    <property type="evidence" value="ECO:0007669"/>
    <property type="project" value="UniProtKB-SubCell"/>
</dbReference>
<dbReference type="GO" id="GO:0033819">
    <property type="term" value="F:lipoyl(octanoyl) transferase activity"/>
    <property type="evidence" value="ECO:0007669"/>
    <property type="project" value="UniProtKB-EC"/>
</dbReference>
<dbReference type="GO" id="GO:0036211">
    <property type="term" value="P:protein modification process"/>
    <property type="evidence" value="ECO:0007669"/>
    <property type="project" value="InterPro"/>
</dbReference>
<dbReference type="CDD" id="cd16444">
    <property type="entry name" value="LipB"/>
    <property type="match status" value="1"/>
</dbReference>
<dbReference type="FunFam" id="3.30.930.10:FF:000035">
    <property type="entry name" value="Putative lipoyltransferase 2, mitochondrial"/>
    <property type="match status" value="1"/>
</dbReference>
<dbReference type="Gene3D" id="3.30.930.10">
    <property type="entry name" value="Bira Bifunctional Protein, Domain 2"/>
    <property type="match status" value="1"/>
</dbReference>
<dbReference type="HAMAP" id="MF_00013">
    <property type="entry name" value="LipB"/>
    <property type="match status" value="1"/>
</dbReference>
<dbReference type="InterPro" id="IPR045864">
    <property type="entry name" value="aa-tRNA-synth_II/BPL/LPL"/>
</dbReference>
<dbReference type="InterPro" id="IPR004143">
    <property type="entry name" value="BPL_LPL_catalytic"/>
</dbReference>
<dbReference type="InterPro" id="IPR000544">
    <property type="entry name" value="Octanoyltransferase"/>
</dbReference>
<dbReference type="InterPro" id="IPR020605">
    <property type="entry name" value="Octanoyltransferase_CS"/>
</dbReference>
<dbReference type="NCBIfam" id="TIGR00214">
    <property type="entry name" value="lipB"/>
    <property type="match status" value="1"/>
</dbReference>
<dbReference type="NCBIfam" id="NF010925">
    <property type="entry name" value="PRK14345.1"/>
    <property type="match status" value="1"/>
</dbReference>
<dbReference type="PANTHER" id="PTHR10993">
    <property type="entry name" value="OCTANOYLTRANSFERASE"/>
    <property type="match status" value="1"/>
</dbReference>
<dbReference type="PANTHER" id="PTHR10993:SF12">
    <property type="entry name" value="OCTANOYLTRANSFERASE"/>
    <property type="match status" value="1"/>
</dbReference>
<dbReference type="Pfam" id="PF21948">
    <property type="entry name" value="LplA-B_cat"/>
    <property type="match status" value="1"/>
</dbReference>
<dbReference type="PIRSF" id="PIRSF016262">
    <property type="entry name" value="LPLase"/>
    <property type="match status" value="1"/>
</dbReference>
<dbReference type="SUPFAM" id="SSF55681">
    <property type="entry name" value="Class II aaRS and biotin synthetases"/>
    <property type="match status" value="1"/>
</dbReference>
<dbReference type="PROSITE" id="PS51733">
    <property type="entry name" value="BPL_LPL_CATALYTIC"/>
    <property type="match status" value="1"/>
</dbReference>
<dbReference type="PROSITE" id="PS01313">
    <property type="entry name" value="LIPB"/>
    <property type="match status" value="1"/>
</dbReference>
<comment type="function">
    <text evidence="1">Catalyzes the transfer of endogenously produced octanoic acid from octanoyl-acyl-carrier-protein onto the lipoyl domains of lipoate-dependent enzymes. Lipoyl-ACP can also act as a substrate although octanoyl-ACP is likely to be the physiological substrate.</text>
</comment>
<comment type="catalytic activity">
    <reaction evidence="1">
        <text>octanoyl-[ACP] + L-lysyl-[protein] = N(6)-octanoyl-L-lysyl-[protein] + holo-[ACP] + H(+)</text>
        <dbReference type="Rhea" id="RHEA:17665"/>
        <dbReference type="Rhea" id="RHEA-COMP:9636"/>
        <dbReference type="Rhea" id="RHEA-COMP:9685"/>
        <dbReference type="Rhea" id="RHEA-COMP:9752"/>
        <dbReference type="Rhea" id="RHEA-COMP:9928"/>
        <dbReference type="ChEBI" id="CHEBI:15378"/>
        <dbReference type="ChEBI" id="CHEBI:29969"/>
        <dbReference type="ChEBI" id="CHEBI:64479"/>
        <dbReference type="ChEBI" id="CHEBI:78463"/>
        <dbReference type="ChEBI" id="CHEBI:78809"/>
        <dbReference type="EC" id="2.3.1.181"/>
    </reaction>
</comment>
<comment type="pathway">
    <text evidence="1">Protein modification; protein lipoylation via endogenous pathway; protein N(6)-(lipoyl)lysine from octanoyl-[acyl-carrier-protein]: step 1/2.</text>
</comment>
<comment type="subcellular location">
    <subcellularLocation>
        <location evidence="1">Cytoplasm</location>
    </subcellularLocation>
</comment>
<comment type="miscellaneous">
    <text evidence="1">In the reaction, the free carboxyl group of octanoic acid is attached via an amide linkage to the epsilon-amino group of a specific lysine residue of lipoyl domains of lipoate-dependent enzymes.</text>
</comment>
<comment type="similarity">
    <text evidence="1">Belongs to the LipB family.</text>
</comment>
<reference key="1">
    <citation type="journal article" date="2005" name="Science">
        <title>Extensive DNA inversions in the B. fragilis genome control variable gene expression.</title>
        <authorList>
            <person name="Cerdeno-Tarraga A.-M."/>
            <person name="Patrick S."/>
            <person name="Crossman L.C."/>
            <person name="Blakely G."/>
            <person name="Abratt V."/>
            <person name="Lennard N."/>
            <person name="Poxton I."/>
            <person name="Duerden B."/>
            <person name="Harris B."/>
            <person name="Quail M.A."/>
            <person name="Barron A."/>
            <person name="Clark L."/>
            <person name="Corton C."/>
            <person name="Doggett J."/>
            <person name="Holden M.T.G."/>
            <person name="Larke N."/>
            <person name="Line A."/>
            <person name="Lord A."/>
            <person name="Norbertczak H."/>
            <person name="Ormond D."/>
            <person name="Price C."/>
            <person name="Rabbinowitsch E."/>
            <person name="Woodward J."/>
            <person name="Barrell B.G."/>
            <person name="Parkhill J."/>
        </authorList>
    </citation>
    <scope>NUCLEOTIDE SEQUENCE [LARGE SCALE GENOMIC DNA]</scope>
    <source>
        <strain>ATCC 25285 / DSM 2151 / CCUG 4856 / JCM 11019 / LMG 10263 / NCTC 9343 / Onslow / VPI 2553 / EN-2</strain>
    </source>
</reference>
<feature type="chain" id="PRO_0000242707" description="Octanoyltransferase">
    <location>
        <begin position="1"/>
        <end position="221"/>
    </location>
</feature>
<feature type="domain" description="BPL/LPL catalytic" evidence="2">
    <location>
        <begin position="35"/>
        <end position="221"/>
    </location>
</feature>
<feature type="active site" description="Acyl-thioester intermediate" evidence="1">
    <location>
        <position position="183"/>
    </location>
</feature>
<feature type="binding site" evidence="1">
    <location>
        <begin position="80"/>
        <end position="87"/>
    </location>
    <ligand>
        <name>substrate</name>
    </ligand>
</feature>
<feature type="binding site" evidence="1">
    <location>
        <begin position="152"/>
        <end position="154"/>
    </location>
    <ligand>
        <name>substrate</name>
    </ligand>
</feature>
<feature type="binding site" evidence="1">
    <location>
        <begin position="165"/>
        <end position="167"/>
    </location>
    <ligand>
        <name>substrate</name>
    </ligand>
</feature>
<feature type="site" description="Lowers pKa of active site Cys" evidence="1">
    <location>
        <position position="149"/>
    </location>
</feature>
<name>LIPB_BACFN</name>
<protein>
    <recommendedName>
        <fullName evidence="1">Octanoyltransferase</fullName>
        <ecNumber evidence="1">2.3.1.181</ecNumber>
    </recommendedName>
    <alternativeName>
        <fullName evidence="1">Lipoate-protein ligase B</fullName>
    </alternativeName>
    <alternativeName>
        <fullName evidence="1">Lipoyl/octanoyl transferase</fullName>
    </alternativeName>
    <alternativeName>
        <fullName evidence="1">Octanoyl-[acyl-carrier-protein]-protein N-octanoyltransferase</fullName>
    </alternativeName>
</protein>
<keyword id="KW-0012">Acyltransferase</keyword>
<keyword id="KW-0963">Cytoplasm</keyword>
<keyword id="KW-0808">Transferase</keyword>
<accession>Q5LDM3</accession>